<sequence length="225" mass="25880">MPIFTGSSSDSEDERTIHKTTKLFTRQRSIHSIFGGGKVADILLWREPKIAATLVIGVSILWFLMEVVEYNFITLICHASMTSMLFFFIWSTASDFLNWERPLIPEVVLDESSFKQLARSFHVRFNQILTKLLDVACGRDPPLFFLTTISLYIVSIIGTYFNFVNLLFIGFVSMQTLPVMYEMYEDDVDTAAGKLMRKMKKLYKKVDTNVLSKIPRGTVKNKKFT</sequence>
<accession>Q9LJQ5</accession>
<accession>Q8LBF5</accession>
<keyword id="KW-0256">Endoplasmic reticulum</keyword>
<keyword id="KW-0472">Membrane</keyword>
<keyword id="KW-1185">Reference proteome</keyword>
<keyword id="KW-0812">Transmembrane</keyword>
<keyword id="KW-1133">Transmembrane helix</keyword>
<dbReference type="EMBL" id="AP000414">
    <property type="protein sequence ID" value="BAB01175.1"/>
    <property type="molecule type" value="Genomic_DNA"/>
</dbReference>
<dbReference type="EMBL" id="CP002686">
    <property type="protein sequence ID" value="AEE76073.1"/>
    <property type="molecule type" value="Genomic_DNA"/>
</dbReference>
<dbReference type="EMBL" id="BT024845">
    <property type="protein sequence ID" value="ABD60728.1"/>
    <property type="molecule type" value="mRNA"/>
</dbReference>
<dbReference type="EMBL" id="AY087239">
    <property type="protein sequence ID" value="AAM64795.1"/>
    <property type="molecule type" value="mRNA"/>
</dbReference>
<dbReference type="RefSeq" id="NP_566604.1">
    <property type="nucleotide sequence ID" value="NM_112710.2"/>
</dbReference>
<dbReference type="FunCoup" id="Q9LJQ5">
    <property type="interactions" value="173"/>
</dbReference>
<dbReference type="STRING" id="3702.Q9LJQ5"/>
<dbReference type="iPTMnet" id="Q9LJQ5"/>
<dbReference type="PaxDb" id="3702-AT3G18260.1"/>
<dbReference type="ProteomicsDB" id="226578"/>
<dbReference type="EnsemblPlants" id="AT3G18260.1">
    <property type="protein sequence ID" value="AT3G18260.1"/>
    <property type="gene ID" value="AT3G18260"/>
</dbReference>
<dbReference type="GeneID" id="821354"/>
<dbReference type="Gramene" id="AT3G18260.1">
    <property type="protein sequence ID" value="AT3G18260.1"/>
    <property type="gene ID" value="AT3G18260"/>
</dbReference>
<dbReference type="KEGG" id="ath:AT3G18260"/>
<dbReference type="Araport" id="AT3G18260"/>
<dbReference type="TAIR" id="AT3G18260">
    <property type="gene designation" value="RTNLB9"/>
</dbReference>
<dbReference type="eggNOG" id="KOG1792">
    <property type="taxonomic scope" value="Eukaryota"/>
</dbReference>
<dbReference type="HOGENOM" id="CLU_066344_2_0_1"/>
<dbReference type="InParanoid" id="Q9LJQ5"/>
<dbReference type="OMA" id="FLYERYE"/>
<dbReference type="PhylomeDB" id="Q9LJQ5"/>
<dbReference type="PRO" id="PR:Q9LJQ5"/>
<dbReference type="Proteomes" id="UP000006548">
    <property type="component" value="Chromosome 3"/>
</dbReference>
<dbReference type="ExpressionAtlas" id="Q9LJQ5">
    <property type="expression patterns" value="baseline and differential"/>
</dbReference>
<dbReference type="GO" id="GO:0005789">
    <property type="term" value="C:endoplasmic reticulum membrane"/>
    <property type="evidence" value="ECO:0007669"/>
    <property type="project" value="UniProtKB-SubCell"/>
</dbReference>
<dbReference type="GO" id="GO:0009617">
    <property type="term" value="P:response to bacterium"/>
    <property type="evidence" value="ECO:0007669"/>
    <property type="project" value="InterPro"/>
</dbReference>
<dbReference type="InterPro" id="IPR003388">
    <property type="entry name" value="Reticulon"/>
</dbReference>
<dbReference type="InterPro" id="IPR045064">
    <property type="entry name" value="Reticulon-like"/>
</dbReference>
<dbReference type="PANTHER" id="PTHR10994">
    <property type="entry name" value="RETICULON"/>
    <property type="match status" value="1"/>
</dbReference>
<dbReference type="PANTHER" id="PTHR10994:SF85">
    <property type="entry name" value="RETICULON-LIKE PROTEIN B9"/>
    <property type="match status" value="1"/>
</dbReference>
<dbReference type="Pfam" id="PF02453">
    <property type="entry name" value="Reticulon"/>
    <property type="match status" value="1"/>
</dbReference>
<dbReference type="PROSITE" id="PS50845">
    <property type="entry name" value="RETICULON"/>
    <property type="match status" value="1"/>
</dbReference>
<feature type="chain" id="PRO_0000371290" description="Reticulon-like protein B9">
    <location>
        <begin position="1"/>
        <end position="225"/>
    </location>
</feature>
<feature type="transmembrane region" description="Helical" evidence="2">
    <location>
        <begin position="50"/>
        <end position="70"/>
    </location>
</feature>
<feature type="transmembrane region" description="Helical" evidence="2">
    <location>
        <begin position="72"/>
        <end position="92"/>
    </location>
</feature>
<feature type="transmembrane region" description="Helical" evidence="2">
    <location>
        <begin position="152"/>
        <end position="172"/>
    </location>
</feature>
<feature type="domain" description="Reticulon" evidence="3">
    <location>
        <begin position="39"/>
        <end position="224"/>
    </location>
</feature>
<feature type="sequence conflict" description="In Ref. 4; AAM64795." evidence="4" ref="4">
    <original>L</original>
    <variation>I</variation>
    <location>
        <position position="103"/>
    </location>
</feature>
<feature type="sequence conflict" description="In Ref. 4; AAM64795." evidence="4" ref="4">
    <original>V</original>
    <variation>M</variation>
    <location>
        <position position="164"/>
    </location>
</feature>
<feature type="sequence conflict" description="In Ref. 4; AAM64795." evidence="4" ref="4">
    <original>S</original>
    <variation>I</variation>
    <location>
        <position position="173"/>
    </location>
</feature>
<reference key="1">
    <citation type="journal article" date="2000" name="DNA Res.">
        <title>Structural analysis of Arabidopsis thaliana chromosome 3. II. Sequence features of the 4,251,695 bp regions covered by 90 P1, TAC and BAC clones.</title>
        <authorList>
            <person name="Kaneko T."/>
            <person name="Katoh T."/>
            <person name="Sato S."/>
            <person name="Nakamura Y."/>
            <person name="Asamizu E."/>
            <person name="Tabata S."/>
        </authorList>
    </citation>
    <scope>NUCLEOTIDE SEQUENCE [LARGE SCALE GENOMIC DNA]</scope>
    <source>
        <strain>cv. Columbia</strain>
    </source>
</reference>
<reference key="2">
    <citation type="journal article" date="2017" name="Plant J.">
        <title>Araport11: a complete reannotation of the Arabidopsis thaliana reference genome.</title>
        <authorList>
            <person name="Cheng C.Y."/>
            <person name="Krishnakumar V."/>
            <person name="Chan A.P."/>
            <person name="Thibaud-Nissen F."/>
            <person name="Schobel S."/>
            <person name="Town C.D."/>
        </authorList>
    </citation>
    <scope>GENOME REANNOTATION</scope>
    <source>
        <strain>cv. Columbia</strain>
    </source>
</reference>
<reference key="3">
    <citation type="submission" date="2006-03" db="EMBL/GenBank/DDBJ databases">
        <title>Arabidopsis ORF clones.</title>
        <authorList>
            <person name="Kim C.J."/>
            <person name="Chen H."/>
            <person name="Shinn P."/>
            <person name="Ecker J.R."/>
        </authorList>
    </citation>
    <scope>NUCLEOTIDE SEQUENCE [LARGE SCALE MRNA]</scope>
    <source>
        <strain>cv. Columbia</strain>
    </source>
</reference>
<reference key="4">
    <citation type="submission" date="2002-03" db="EMBL/GenBank/DDBJ databases">
        <title>Full-length cDNA from Arabidopsis thaliana.</title>
        <authorList>
            <person name="Brover V.V."/>
            <person name="Troukhan M.E."/>
            <person name="Alexandrov N.A."/>
            <person name="Lu Y.-P."/>
            <person name="Flavell R.B."/>
            <person name="Feldmann K.A."/>
        </authorList>
    </citation>
    <scope>NUCLEOTIDE SEQUENCE [LARGE SCALE MRNA]</scope>
</reference>
<reference key="5">
    <citation type="journal article" date="2007" name="FEBS Lett.">
        <title>Reticulon-like proteins in Arabidopsis thaliana: structural organization and ER localization.</title>
        <authorList>
            <person name="Nziengui H."/>
            <person name="Bouhidel K."/>
            <person name="Pillon D."/>
            <person name="Der C."/>
            <person name="Marty F."/>
            <person name="Schoefs B."/>
        </authorList>
    </citation>
    <scope>GENE FAMILY</scope>
    <scope>NOMENCLATURE</scope>
</reference>
<gene>
    <name type="primary">RTNLB9</name>
    <name type="ordered locus">At3g18260</name>
    <name type="ORF">MIE15.5</name>
</gene>
<organism>
    <name type="scientific">Arabidopsis thaliana</name>
    <name type="common">Mouse-ear cress</name>
    <dbReference type="NCBI Taxonomy" id="3702"/>
    <lineage>
        <taxon>Eukaryota</taxon>
        <taxon>Viridiplantae</taxon>
        <taxon>Streptophyta</taxon>
        <taxon>Embryophyta</taxon>
        <taxon>Tracheophyta</taxon>
        <taxon>Spermatophyta</taxon>
        <taxon>Magnoliopsida</taxon>
        <taxon>eudicotyledons</taxon>
        <taxon>Gunneridae</taxon>
        <taxon>Pentapetalae</taxon>
        <taxon>rosids</taxon>
        <taxon>malvids</taxon>
        <taxon>Brassicales</taxon>
        <taxon>Brassicaceae</taxon>
        <taxon>Camelineae</taxon>
        <taxon>Arabidopsis</taxon>
    </lineage>
</organism>
<name>RTNLI_ARATH</name>
<proteinExistence type="evidence at transcript level"/>
<evidence type="ECO:0000250" key="1">
    <source>
        <dbReference type="UniProtKB" id="Q9SH59"/>
    </source>
</evidence>
<evidence type="ECO:0000255" key="2"/>
<evidence type="ECO:0000255" key="3">
    <source>
        <dbReference type="PROSITE-ProRule" id="PRU00170"/>
    </source>
</evidence>
<evidence type="ECO:0000305" key="4"/>
<comment type="subcellular location">
    <subcellularLocation>
        <location evidence="1">Endoplasmic reticulum membrane</location>
        <topology evidence="2">Multi-pass membrane protein</topology>
    </subcellularLocation>
</comment>
<protein>
    <recommendedName>
        <fullName>Reticulon-like protein B9</fullName>
        <shortName>AtRTNLB9</shortName>
    </recommendedName>
</protein>